<reference key="1">
    <citation type="journal article" date="2003" name="J. Bacteriol.">
        <title>Comparative analyses of the complete genome sequences of Pierce's disease and citrus variegated chlorosis strains of Xylella fastidiosa.</title>
        <authorList>
            <person name="Van Sluys M.A."/>
            <person name="de Oliveira M.C."/>
            <person name="Monteiro-Vitorello C.B."/>
            <person name="Miyaki C.Y."/>
            <person name="Furlan L.R."/>
            <person name="Camargo L.E.A."/>
            <person name="da Silva A.C.R."/>
            <person name="Moon D.H."/>
            <person name="Takita M.A."/>
            <person name="Lemos E.G.M."/>
            <person name="Machado M.A."/>
            <person name="Ferro M.I.T."/>
            <person name="da Silva F.R."/>
            <person name="Goldman M.H.S."/>
            <person name="Goldman G.H."/>
            <person name="Lemos M.V.F."/>
            <person name="El-Dorry H."/>
            <person name="Tsai S.M."/>
            <person name="Carrer H."/>
            <person name="Carraro D.M."/>
            <person name="de Oliveira R.C."/>
            <person name="Nunes L.R."/>
            <person name="Siqueira W.J."/>
            <person name="Coutinho L.L."/>
            <person name="Kimura E.T."/>
            <person name="Ferro E.S."/>
            <person name="Harakava R."/>
            <person name="Kuramae E.E."/>
            <person name="Marino C.L."/>
            <person name="Giglioti E."/>
            <person name="Abreu I.L."/>
            <person name="Alves L.M.C."/>
            <person name="do Amaral A.M."/>
            <person name="Baia G.S."/>
            <person name="Blanco S.R."/>
            <person name="Brito M.S."/>
            <person name="Cannavan F.S."/>
            <person name="Celestino A.V."/>
            <person name="da Cunha A.F."/>
            <person name="Fenille R.C."/>
            <person name="Ferro J.A."/>
            <person name="Formighieri E.F."/>
            <person name="Kishi L.T."/>
            <person name="Leoni S.G."/>
            <person name="Oliveira A.R."/>
            <person name="Rosa V.E. Jr."/>
            <person name="Sassaki F.T."/>
            <person name="Sena J.A.D."/>
            <person name="de Souza A.A."/>
            <person name="Truffi D."/>
            <person name="Tsukumo F."/>
            <person name="Yanai G.M."/>
            <person name="Zaros L.G."/>
            <person name="Civerolo E.L."/>
            <person name="Simpson A.J.G."/>
            <person name="Almeida N.F. Jr."/>
            <person name="Setubal J.C."/>
            <person name="Kitajima J.P."/>
        </authorList>
    </citation>
    <scope>NUCLEOTIDE SEQUENCE [LARGE SCALE GENOMIC DNA]</scope>
    <source>
        <strain>Temecula1 / ATCC 700964</strain>
    </source>
</reference>
<comment type="function">
    <text evidence="1">DNA repair enzyme involved in the repair of deaminated bases. Selectively cleaves double-stranded DNA at the second phosphodiester bond 3' to a deoxyinosine leaving behind the intact lesion on the nicked DNA.</text>
</comment>
<comment type="catalytic activity">
    <reaction evidence="1">
        <text>Endonucleolytic cleavage at apurinic or apyrimidinic sites to products with a 5'-phosphate.</text>
        <dbReference type="EC" id="3.1.21.7"/>
    </reaction>
</comment>
<comment type="cofactor">
    <cofactor evidence="1">
        <name>Mg(2+)</name>
        <dbReference type="ChEBI" id="CHEBI:18420"/>
    </cofactor>
</comment>
<comment type="subcellular location">
    <subcellularLocation>
        <location evidence="1">Cytoplasm</location>
    </subcellularLocation>
</comment>
<comment type="similarity">
    <text evidence="1">Belongs to the endonuclease V family.</text>
</comment>
<sequence>MKISSIDSIFAAWDGSITEARRLQSDMAERIVLKDEPNLLSEPTLLAGFDVGFEDEGRTTRAAAVLMNAGDLRLLETHVVRVPTSMPYVPGLLSFRELPALLQALTQLSRIPALVFVDGHGIAHPRRLGIAAHFGLVTNLPCIGVAKKRLVGDFVEPGTAFGEHTPILLHGTQVGWALRSKMHCKPLIISPGHKVSLHSALTWTQRCLTGYRLPEPTRQADRLASRRGQKIVSDLPSLL</sequence>
<accession>Q87CZ0</accession>
<keyword id="KW-0963">Cytoplasm</keyword>
<keyword id="KW-0227">DNA damage</keyword>
<keyword id="KW-0234">DNA repair</keyword>
<keyword id="KW-0255">Endonuclease</keyword>
<keyword id="KW-0378">Hydrolase</keyword>
<keyword id="KW-0460">Magnesium</keyword>
<keyword id="KW-0479">Metal-binding</keyword>
<keyword id="KW-0540">Nuclease</keyword>
<keyword id="KW-1185">Reference proteome</keyword>
<name>NFI_XYLFT</name>
<protein>
    <recommendedName>
        <fullName evidence="1">Endonuclease V</fullName>
        <ecNumber evidence="1">3.1.21.7</ecNumber>
    </recommendedName>
    <alternativeName>
        <fullName evidence="1">Deoxyinosine 3'endonuclease</fullName>
    </alternativeName>
    <alternativeName>
        <fullName evidence="1">Deoxyribonuclease V</fullName>
        <shortName evidence="1">DNase V</shortName>
    </alternativeName>
</protein>
<dbReference type="EC" id="3.1.21.7" evidence="1"/>
<dbReference type="EMBL" id="AE009442">
    <property type="protein sequence ID" value="AAO28764.1"/>
    <property type="molecule type" value="Genomic_DNA"/>
</dbReference>
<dbReference type="SMR" id="Q87CZ0"/>
<dbReference type="KEGG" id="xft:PD_0899"/>
<dbReference type="HOGENOM" id="CLU_047631_1_0_6"/>
<dbReference type="Proteomes" id="UP000002516">
    <property type="component" value="Chromosome"/>
</dbReference>
<dbReference type="GO" id="GO:0005737">
    <property type="term" value="C:cytoplasm"/>
    <property type="evidence" value="ECO:0007669"/>
    <property type="project" value="UniProtKB-SubCell"/>
</dbReference>
<dbReference type="GO" id="GO:0043737">
    <property type="term" value="F:deoxyribonuclease V activity"/>
    <property type="evidence" value="ECO:0007669"/>
    <property type="project" value="UniProtKB-UniRule"/>
</dbReference>
<dbReference type="GO" id="GO:0000287">
    <property type="term" value="F:magnesium ion binding"/>
    <property type="evidence" value="ECO:0007669"/>
    <property type="project" value="UniProtKB-UniRule"/>
</dbReference>
<dbReference type="GO" id="GO:0016891">
    <property type="term" value="F:RNA endonuclease activity, producing 5'-phosphomonoesters"/>
    <property type="evidence" value="ECO:0007669"/>
    <property type="project" value="TreeGrafter"/>
</dbReference>
<dbReference type="GO" id="GO:0003727">
    <property type="term" value="F:single-stranded RNA binding"/>
    <property type="evidence" value="ECO:0007669"/>
    <property type="project" value="TreeGrafter"/>
</dbReference>
<dbReference type="GO" id="GO:0006281">
    <property type="term" value="P:DNA repair"/>
    <property type="evidence" value="ECO:0007669"/>
    <property type="project" value="UniProtKB-UniRule"/>
</dbReference>
<dbReference type="CDD" id="cd06559">
    <property type="entry name" value="Endonuclease_V"/>
    <property type="match status" value="1"/>
</dbReference>
<dbReference type="FunFam" id="3.30.2170.10:FF:000001">
    <property type="entry name" value="Endonuclease V"/>
    <property type="match status" value="1"/>
</dbReference>
<dbReference type="Gene3D" id="3.30.2170.10">
    <property type="entry name" value="archaeoglobus fulgidus dsm 4304 superfamily"/>
    <property type="match status" value="1"/>
</dbReference>
<dbReference type="HAMAP" id="MF_00801">
    <property type="entry name" value="Endonuclease_5"/>
    <property type="match status" value="1"/>
</dbReference>
<dbReference type="InterPro" id="IPR007581">
    <property type="entry name" value="Endonuclease-V"/>
</dbReference>
<dbReference type="NCBIfam" id="NF008629">
    <property type="entry name" value="PRK11617.1"/>
    <property type="match status" value="1"/>
</dbReference>
<dbReference type="PANTHER" id="PTHR28511">
    <property type="entry name" value="ENDONUCLEASE V"/>
    <property type="match status" value="1"/>
</dbReference>
<dbReference type="PANTHER" id="PTHR28511:SF1">
    <property type="entry name" value="ENDONUCLEASE V"/>
    <property type="match status" value="1"/>
</dbReference>
<dbReference type="Pfam" id="PF04493">
    <property type="entry name" value="Endonuclease_5"/>
    <property type="match status" value="1"/>
</dbReference>
<evidence type="ECO:0000255" key="1">
    <source>
        <dbReference type="HAMAP-Rule" id="MF_00801"/>
    </source>
</evidence>
<proteinExistence type="inferred from homology"/>
<feature type="chain" id="PRO_0000159680" description="Endonuclease V">
    <location>
        <begin position="1"/>
        <end position="239"/>
    </location>
</feature>
<feature type="binding site" evidence="1">
    <location>
        <position position="50"/>
    </location>
    <ligand>
        <name>Mg(2+)</name>
        <dbReference type="ChEBI" id="CHEBI:18420"/>
    </ligand>
</feature>
<feature type="binding site" evidence="1">
    <location>
        <position position="118"/>
    </location>
    <ligand>
        <name>Mg(2+)</name>
        <dbReference type="ChEBI" id="CHEBI:18420"/>
    </ligand>
</feature>
<feature type="site" description="Interaction with target DNA" evidence="1">
    <location>
        <position position="88"/>
    </location>
</feature>
<gene>
    <name evidence="1" type="primary">nfi</name>
    <name type="ordered locus">PD_0899</name>
</gene>
<organism>
    <name type="scientific">Xylella fastidiosa (strain Temecula1 / ATCC 700964)</name>
    <dbReference type="NCBI Taxonomy" id="183190"/>
    <lineage>
        <taxon>Bacteria</taxon>
        <taxon>Pseudomonadati</taxon>
        <taxon>Pseudomonadota</taxon>
        <taxon>Gammaproteobacteria</taxon>
        <taxon>Lysobacterales</taxon>
        <taxon>Lysobacteraceae</taxon>
        <taxon>Xylella</taxon>
    </lineage>
</organism>